<keyword id="KW-1185">Reference proteome</keyword>
<keyword id="KW-0677">Repeat</keyword>
<evidence type="ECO:0000256" key="1">
    <source>
        <dbReference type="SAM" id="MobiDB-lite"/>
    </source>
</evidence>
<evidence type="ECO:0000305" key="2"/>
<organism>
    <name type="scientific">Onchocerca volvulus</name>
    <dbReference type="NCBI Taxonomy" id="6282"/>
    <lineage>
        <taxon>Eukaryota</taxon>
        <taxon>Metazoa</taxon>
        <taxon>Ecdysozoa</taxon>
        <taxon>Nematoda</taxon>
        <taxon>Chromadorea</taxon>
        <taxon>Rhabditida</taxon>
        <taxon>Spirurina</taxon>
        <taxon>Spiruromorpha</taxon>
        <taxon>Filarioidea</taxon>
        <taxon>Onchocercidae</taxon>
        <taxon>Onchocerca</taxon>
    </lineage>
</organism>
<dbReference type="EMBL" id="U01099">
    <property type="protein sequence ID" value="AAA20215.1"/>
    <property type="status" value="ALT_INIT"/>
    <property type="molecule type" value="mRNA"/>
</dbReference>
<dbReference type="STRING" id="6282.P37801"/>
<dbReference type="HOGENOM" id="CLU_048343_1_0_1"/>
<dbReference type="Proteomes" id="UP000024404">
    <property type="component" value="Unassembled WGS sequence"/>
</dbReference>
<dbReference type="GO" id="GO:0015629">
    <property type="term" value="C:actin cytoskeleton"/>
    <property type="evidence" value="ECO:0007669"/>
    <property type="project" value="TreeGrafter"/>
</dbReference>
<dbReference type="GO" id="GO:0051015">
    <property type="term" value="F:actin filament binding"/>
    <property type="evidence" value="ECO:0007669"/>
    <property type="project" value="TreeGrafter"/>
</dbReference>
<dbReference type="GO" id="GO:0007015">
    <property type="term" value="P:actin filament organization"/>
    <property type="evidence" value="ECO:0007669"/>
    <property type="project" value="TreeGrafter"/>
</dbReference>
<dbReference type="InterPro" id="IPR050606">
    <property type="entry name" value="Calponin-like"/>
</dbReference>
<dbReference type="InterPro" id="IPR000557">
    <property type="entry name" value="Calponin_repeat"/>
</dbReference>
<dbReference type="PANTHER" id="PTHR47385">
    <property type="entry name" value="CALPONIN"/>
    <property type="match status" value="1"/>
</dbReference>
<dbReference type="PANTHER" id="PTHR47385:SF11">
    <property type="entry name" value="PROTEIN UNC-87"/>
    <property type="match status" value="1"/>
</dbReference>
<dbReference type="Pfam" id="PF00402">
    <property type="entry name" value="Calponin"/>
    <property type="match status" value="6"/>
</dbReference>
<dbReference type="PROSITE" id="PS01052">
    <property type="entry name" value="CALPONIN_1"/>
    <property type="match status" value="5"/>
</dbReference>
<dbReference type="PROSITE" id="PS51122">
    <property type="entry name" value="CALPONIN_2"/>
    <property type="match status" value="7"/>
</dbReference>
<accession>P37801</accession>
<proteinExistence type="evidence at transcript level"/>
<name>CLPH_ONCVO</name>
<feature type="chain" id="PRO_0000204793" description="Calponin homolog OV9M">
    <location>
        <begin position="1"/>
        <end position="378"/>
    </location>
</feature>
<feature type="repeat" description="Calponin-like 1">
    <location>
        <begin position="50"/>
        <end position="75"/>
    </location>
</feature>
<feature type="repeat" description="Calponin-like 2">
    <location>
        <begin position="98"/>
        <end position="123"/>
    </location>
</feature>
<feature type="repeat" description="Calponin-like 3">
    <location>
        <begin position="151"/>
        <end position="176"/>
    </location>
</feature>
<feature type="repeat" description="Calponin-like 4">
    <location>
        <begin position="197"/>
        <end position="222"/>
    </location>
</feature>
<feature type="repeat" description="Calponin-like 5">
    <location>
        <begin position="244"/>
        <end position="269"/>
    </location>
</feature>
<feature type="repeat" description="Calponin-like 6">
    <location>
        <begin position="285"/>
        <end position="310"/>
    </location>
</feature>
<feature type="repeat" description="Calponin-like 7">
    <location>
        <begin position="330"/>
        <end position="355"/>
    </location>
</feature>
<feature type="region of interest" description="Disordered" evidence="1">
    <location>
        <begin position="1"/>
        <end position="35"/>
    </location>
</feature>
<feature type="region of interest" description="Disordered" evidence="1">
    <location>
        <begin position="175"/>
        <end position="194"/>
    </location>
</feature>
<feature type="region of interest" description="Disordered" evidence="1">
    <location>
        <begin position="230"/>
        <end position="256"/>
    </location>
</feature>
<feature type="region of interest" description="Disordered" evidence="1">
    <location>
        <begin position="331"/>
        <end position="352"/>
    </location>
</feature>
<feature type="compositionally biased region" description="Low complexity" evidence="1">
    <location>
        <begin position="1"/>
        <end position="20"/>
    </location>
</feature>
<feature type="compositionally biased region" description="Polar residues" evidence="1">
    <location>
        <begin position="238"/>
        <end position="256"/>
    </location>
</feature>
<comment type="function">
    <text>Could be involved in muscle contraction.</text>
</comment>
<comment type="tissue specificity">
    <text>Found in the longitudinal muscles below the hypodermis.</text>
</comment>
<comment type="developmental stage">
    <text>Present in infective larvae and adult stages.</text>
</comment>
<comment type="miscellaneous">
    <text>There are apparently several forms of the native protein which appear to be expressed in a stage-specific manner.</text>
</comment>
<comment type="similarity">
    <text evidence="2">Belongs to the calponin family.</text>
</comment>
<comment type="caution">
    <text evidence="2">It is uncertain whether Met-1 or Met-22 is the initiator.</text>
</comment>
<comment type="sequence caution" evidence="2">
    <conflict type="erroneous initiation">
        <sequence resource="EMBL-CDS" id="AAA20215"/>
    </conflict>
</comment>
<protein>
    <recommendedName>
        <fullName>Calponin homolog OV9M</fullName>
    </recommendedName>
</protein>
<reference key="1">
    <citation type="journal article" date="1994" name="Mol. Biochem. Parasitol.">
        <title>Identification and characterization of an Onchocerca volvulus cDNA clone encoding a highly immunogenic calponin-like protein.</title>
        <authorList>
            <person name="Irvine M."/>
            <person name="Huima T."/>
            <person name="Prince A.M."/>
            <person name="Lustigman S."/>
        </authorList>
    </citation>
    <scope>NUCLEOTIDE SEQUENCE [MRNA]</scope>
</reference>
<sequence length="378" mass="41852">MPAQPAQENAQDADDAQANATMETRVAGQGQPKRVGRWTLAQLRQTDGIIPSQAGWNKGDSQKLMTNFGTPRNTQTRVKSENLAEIPEEVLMRTHGEVRLQSGTNKFESQRGMTGFGTGRDVCREGVHVNQAPSDLQPLDEEKIRLSDGIVRLQAGTNKYDSQKGMTGFGTARRETTKMTDSKHPDYDHERPDQSEIPLQAGTNKFASQKGMIGFGTSRRETTKICDSAHPEYDPESSIDSSTIPSQMGSNKYASQKGMTGFGQPRWEVLDPSISWQNRKSQGMVRLQSGTNRFASQQGMTGFGTPRNTTYEAEAGELPYEDMKKSETVIPSQAGWNRGDSQKGMTGFGAPRDVKGKHLKRIWELEYPEEAEASLDRL</sequence>